<protein>
    <recommendedName>
        <fullName>Cytochrome P450 6B4</fullName>
        <ecNumber>1.14.14.1</ecNumber>
    </recommendedName>
    <alternativeName>
        <fullName>CYP6B4v1/CYP6B4v2</fullName>
    </alternativeName>
    <alternativeName>
        <fullName>CYPVIB4</fullName>
    </alternativeName>
</protein>
<comment type="function">
    <text>Enables the insect to feed on furanocoumarin-producing plants and evolved as an adaptation for detoxification of xanthotoxin and other furanocoumarins. This isozyme metabolizes isopimpinellin, imperatorin, and bergapten at high rates, xanthotoxin and psoralen at intermediate rates and angelicin, sphondin, and trioxsalen only at very low rates.</text>
</comment>
<comment type="catalytic activity">
    <reaction>
        <text>an organic molecule + reduced [NADPH--hemoprotein reductase] + O2 = an alcohol + oxidized [NADPH--hemoprotein reductase] + H2O + H(+)</text>
        <dbReference type="Rhea" id="RHEA:17149"/>
        <dbReference type="Rhea" id="RHEA-COMP:11964"/>
        <dbReference type="Rhea" id="RHEA-COMP:11965"/>
        <dbReference type="ChEBI" id="CHEBI:15377"/>
        <dbReference type="ChEBI" id="CHEBI:15378"/>
        <dbReference type="ChEBI" id="CHEBI:15379"/>
        <dbReference type="ChEBI" id="CHEBI:30879"/>
        <dbReference type="ChEBI" id="CHEBI:57618"/>
        <dbReference type="ChEBI" id="CHEBI:58210"/>
        <dbReference type="ChEBI" id="CHEBI:142491"/>
        <dbReference type="EC" id="1.14.14.1"/>
    </reaction>
</comment>
<comment type="cofactor">
    <cofactor evidence="1">
        <name>heme</name>
        <dbReference type="ChEBI" id="CHEBI:30413"/>
    </cofactor>
</comment>
<comment type="subcellular location">
    <subcellularLocation>
        <location>Endoplasmic reticulum membrane</location>
        <topology>Peripheral membrane protein</topology>
    </subcellularLocation>
    <subcellularLocation>
        <location>Microsome membrane</location>
        <topology>Peripheral membrane protein</topology>
    </subcellularLocation>
</comment>
<comment type="induction">
    <text>By furnocoumarin.</text>
</comment>
<comment type="polymorphism">
    <text>The sequence shown is that of 6B4-1, 6B4-2 seems to differ in 7 positions and is probably an allele.</text>
</comment>
<comment type="similarity">
    <text evidence="2">Belongs to the cytochrome P450 family.</text>
</comment>
<accession>Q27902</accession>
<accession>Q95035</accession>
<reference key="1">
    <citation type="journal article" date="1997" name="Insect Biochem. Mol. Biol.">
        <title>Isolation and characterization of CYP6B4, a furanocoumarin-inducible cytochrome P450 from a polyphagous caterpillar (Lepidoptera: Papilionidae).</title>
        <authorList>
            <person name="Hung C.F."/>
            <person name="Berenbaum M.R."/>
            <person name="Schuler M.A."/>
        </authorList>
    </citation>
    <scope>NUCLEOTIDE SEQUENCE [GENOMIC DNA / MRNA]</scope>
</reference>
<dbReference type="EC" id="1.14.14.1"/>
<dbReference type="EMBL" id="U47059">
    <property type="protein sequence ID" value="AAB05892.1"/>
    <property type="molecule type" value="mRNA"/>
</dbReference>
<dbReference type="EMBL" id="U65489">
    <property type="protein sequence ID" value="AAB06742.1"/>
    <property type="molecule type" value="Genomic_DNA"/>
</dbReference>
<dbReference type="SMR" id="Q27902"/>
<dbReference type="GO" id="GO:0005789">
    <property type="term" value="C:endoplasmic reticulum membrane"/>
    <property type="evidence" value="ECO:0007669"/>
    <property type="project" value="UniProtKB-SubCell"/>
</dbReference>
<dbReference type="GO" id="GO:0020037">
    <property type="term" value="F:heme binding"/>
    <property type="evidence" value="ECO:0007669"/>
    <property type="project" value="InterPro"/>
</dbReference>
<dbReference type="GO" id="GO:0005506">
    <property type="term" value="F:iron ion binding"/>
    <property type="evidence" value="ECO:0007669"/>
    <property type="project" value="InterPro"/>
</dbReference>
<dbReference type="GO" id="GO:0016712">
    <property type="term" value="F:oxidoreductase activity, acting on paired donors, with incorporation or reduction of molecular oxygen, reduced flavin or flavoprotein as one donor, and incorporation of one atom of oxygen"/>
    <property type="evidence" value="ECO:0007669"/>
    <property type="project" value="UniProtKB-EC"/>
</dbReference>
<dbReference type="CDD" id="cd11056">
    <property type="entry name" value="CYP6-like"/>
    <property type="match status" value="1"/>
</dbReference>
<dbReference type="FunFam" id="1.10.630.10:FF:000042">
    <property type="entry name" value="Cytochrome P450"/>
    <property type="match status" value="1"/>
</dbReference>
<dbReference type="Gene3D" id="1.10.630.10">
    <property type="entry name" value="Cytochrome P450"/>
    <property type="match status" value="1"/>
</dbReference>
<dbReference type="InterPro" id="IPR001128">
    <property type="entry name" value="Cyt_P450"/>
</dbReference>
<dbReference type="InterPro" id="IPR017972">
    <property type="entry name" value="Cyt_P450_CS"/>
</dbReference>
<dbReference type="InterPro" id="IPR002401">
    <property type="entry name" value="Cyt_P450_E_grp-I"/>
</dbReference>
<dbReference type="InterPro" id="IPR036396">
    <property type="entry name" value="Cyt_P450_sf"/>
</dbReference>
<dbReference type="InterPro" id="IPR050476">
    <property type="entry name" value="Insect_CytP450_Detox"/>
</dbReference>
<dbReference type="PANTHER" id="PTHR24292:SF54">
    <property type="entry name" value="CYP9F3-RELATED"/>
    <property type="match status" value="1"/>
</dbReference>
<dbReference type="PANTHER" id="PTHR24292">
    <property type="entry name" value="CYTOCHROME P450"/>
    <property type="match status" value="1"/>
</dbReference>
<dbReference type="Pfam" id="PF00067">
    <property type="entry name" value="p450"/>
    <property type="match status" value="1"/>
</dbReference>
<dbReference type="PRINTS" id="PR00463">
    <property type="entry name" value="EP450I"/>
</dbReference>
<dbReference type="PRINTS" id="PR00385">
    <property type="entry name" value="P450"/>
</dbReference>
<dbReference type="SUPFAM" id="SSF48264">
    <property type="entry name" value="Cytochrome P450"/>
    <property type="match status" value="1"/>
</dbReference>
<dbReference type="PROSITE" id="PS00086">
    <property type="entry name" value="CYTOCHROME_P450"/>
    <property type="match status" value="1"/>
</dbReference>
<evidence type="ECO:0000250" key="1"/>
<evidence type="ECO:0000305" key="2"/>
<gene>
    <name type="primary">CYP6B4</name>
</gene>
<proteinExistence type="evidence at transcript level"/>
<name>CP6B4_PAPGL</name>
<keyword id="KW-0256">Endoplasmic reticulum</keyword>
<keyword id="KW-0349">Heme</keyword>
<keyword id="KW-0408">Iron</keyword>
<keyword id="KW-0472">Membrane</keyword>
<keyword id="KW-0479">Metal-binding</keyword>
<keyword id="KW-0492">Microsome</keyword>
<keyword id="KW-0503">Monooxygenase</keyword>
<keyword id="KW-0560">Oxidoreductase</keyword>
<sequence length="500" mass="58046">MLTIFIVTATLFAILYFYFTRNFNYWKDRNVVGPEPTVFFGNIMESVIRRKHLIMIYKDIYEAFPKEKVVGIYRMTTPCLLLRDLDVIKHVMIKDFDLFNDRGVEFSEEGLGLNIFHADGDRWRVLRQCFTPLFTSGKLKNMLNLMSDRGDKFIKMVEKFCDKEPEQQIIPLVRKFTMASITTCAFGMELDEEMIETLDKLDSLIFTTSYGNEIDMMYPGILKKLNSSIFSKMIAPFFDNLTKTIIEQRGGKPTNRKDLMDLILELRQKKAIEPMKKTHDEQVTTLELTDSVIAAQTFIFYAAGYETSASTMSFLLFELAENPDIQEKVIAEVDETLKRHNGEITYDTLSEMTYLTQVFHETLRKYPVADILLRNAKADYAVPGTNVTLKKGQTVVVSGFGIHYDPKYYPDPEKFDPERFSPENVRNRHPCAYIPFGAGQRKCLGMRFGQWQVQVCIIKLLSKFRFEPSTKTMSEFNYDPKRLLVYPKSGIFLNIIPRNY</sequence>
<feature type="chain" id="PRO_0000051896" description="Cytochrome P450 6B4">
    <location>
        <begin position="1"/>
        <end position="500"/>
    </location>
</feature>
<feature type="binding site" description="axial binding residue" evidence="1">
    <location>
        <position position="443"/>
    </location>
    <ligand>
        <name>heme</name>
        <dbReference type="ChEBI" id="CHEBI:30413"/>
    </ligand>
    <ligandPart>
        <name>Fe</name>
        <dbReference type="ChEBI" id="CHEBI:18248"/>
    </ligandPart>
</feature>
<feature type="sequence variant" description="In 6B4-2.">
    <original>F</original>
    <variation>L</variation>
    <location>
        <position position="17"/>
    </location>
</feature>
<feature type="sequence variant" description="In 6B4-2.">
    <original>F</original>
    <variation>I</variation>
    <location>
        <position position="160"/>
    </location>
</feature>
<feature type="sequence variant" description="In 6B4-2.">
    <original>I</original>
    <variation>L</variation>
    <location>
        <position position="229"/>
    </location>
</feature>
<feature type="sequence variant" description="In 6B4-2.">
    <original>L</original>
    <variation>F</variation>
    <location>
        <position position="286"/>
    </location>
</feature>
<feature type="sequence variant" description="In 6B4-2.">
    <original>N</original>
    <variation>S</variation>
    <location>
        <position position="477"/>
    </location>
</feature>
<feature type="sequence variant" description="In 6B4-2.">
    <original>K</original>
    <variation>T</variation>
    <location>
        <position position="481"/>
    </location>
</feature>
<feature type="sequence variant" description="In 6B4-2.">
    <original>I</original>
    <variation>L</variation>
    <location>
        <position position="496"/>
    </location>
</feature>
<organism>
    <name type="scientific">Papilio glaucus</name>
    <name type="common">Eastern tiger swallowtail butterfly</name>
    <name type="synonym">Pterourus glaucus</name>
    <dbReference type="NCBI Taxonomy" id="45779"/>
    <lineage>
        <taxon>Eukaryota</taxon>
        <taxon>Metazoa</taxon>
        <taxon>Ecdysozoa</taxon>
        <taxon>Arthropoda</taxon>
        <taxon>Hexapoda</taxon>
        <taxon>Insecta</taxon>
        <taxon>Pterygota</taxon>
        <taxon>Neoptera</taxon>
        <taxon>Endopterygota</taxon>
        <taxon>Lepidoptera</taxon>
        <taxon>Glossata</taxon>
        <taxon>Ditrysia</taxon>
        <taxon>Papilionoidea</taxon>
        <taxon>Papilionidae</taxon>
        <taxon>Papilioninae</taxon>
        <taxon>Papilio</taxon>
        <taxon>Pterourus</taxon>
    </lineage>
</organism>